<dbReference type="EC" id="3.4.-.-" evidence="5"/>
<dbReference type="EMBL" id="AELD01000001">
    <property type="status" value="NOT_ANNOTATED_CDS"/>
    <property type="molecule type" value="Genomic_DNA"/>
</dbReference>
<dbReference type="PDB" id="9ILD">
    <property type="method" value="X-ray"/>
    <property type="resolution" value="2.18 A"/>
    <property type="chains" value="A=1-156"/>
</dbReference>
<dbReference type="PDBsum" id="9ILD"/>
<dbReference type="SMR" id="P0DTF3"/>
<dbReference type="GO" id="GO:0046872">
    <property type="term" value="F:metal ion binding"/>
    <property type="evidence" value="ECO:0007669"/>
    <property type="project" value="UniProtKB-KW"/>
</dbReference>
<dbReference type="GO" id="GO:0008237">
    <property type="term" value="F:metallopeptidase activity"/>
    <property type="evidence" value="ECO:0007669"/>
    <property type="project" value="UniProtKB-KW"/>
</dbReference>
<dbReference type="GO" id="GO:0051607">
    <property type="term" value="P:defense response to virus"/>
    <property type="evidence" value="ECO:0007669"/>
    <property type="project" value="UniProtKB-KW"/>
</dbReference>
<dbReference type="GO" id="GO:0006508">
    <property type="term" value="P:proteolysis"/>
    <property type="evidence" value="ECO:0007669"/>
    <property type="project" value="UniProtKB-KW"/>
</dbReference>
<dbReference type="Gene3D" id="3.40.140.10">
    <property type="entry name" value="Cytidine Deaminase, domain 2"/>
    <property type="match status" value="1"/>
</dbReference>
<dbReference type="InterPro" id="IPR011952">
    <property type="entry name" value="CAP3"/>
</dbReference>
<dbReference type="InterPro" id="IPR028090">
    <property type="entry name" value="JAB_dom_prok"/>
</dbReference>
<dbReference type="NCBIfam" id="TIGR02256">
    <property type="entry name" value="ICE_VC0181"/>
    <property type="match status" value="1"/>
</dbReference>
<dbReference type="Pfam" id="PF14464">
    <property type="entry name" value="Prok-JAB"/>
    <property type="match status" value="1"/>
</dbReference>
<dbReference type="PIRSF" id="PIRSF028170">
    <property type="entry name" value="CHP02256"/>
    <property type="match status" value="1"/>
</dbReference>
<dbReference type="SUPFAM" id="SSF102712">
    <property type="entry name" value="JAB1/MPN domain"/>
    <property type="match status" value="1"/>
</dbReference>
<feature type="chain" id="PRO_0000451858" description="CD-NTase/cGAS isopeptidase">
    <location>
        <begin position="1"/>
        <end position="156"/>
    </location>
</feature>
<feature type="domain" description="MPN" evidence="3">
    <location>
        <begin position="9"/>
        <end position="147"/>
    </location>
</feature>
<feature type="short sequence motif" description="JAMM motif" evidence="3">
    <location>
        <begin position="100"/>
        <end position="113"/>
    </location>
</feature>
<feature type="active site" description="Proton donor/acceptor" evidence="1">
    <location>
        <position position="38"/>
    </location>
</feature>
<feature type="binding site" evidence="2">
    <location>
        <position position="100"/>
    </location>
    <ligand>
        <name>Zn(2+)</name>
        <dbReference type="ChEBI" id="CHEBI:29105"/>
        <note>catalytic</note>
    </ligand>
</feature>
<feature type="binding site" evidence="2">
    <location>
        <position position="102"/>
    </location>
    <ligand>
        <name>Zn(2+)</name>
        <dbReference type="ChEBI" id="CHEBI:29105"/>
        <note>catalytic</note>
    </ligand>
</feature>
<feature type="binding site" evidence="2">
    <location>
        <position position="113"/>
    </location>
    <ligand>
        <name>Zn(2+)</name>
        <dbReference type="ChEBI" id="CHEBI:29105"/>
        <note>catalytic</note>
    </ligand>
</feature>
<feature type="mutagenesis site" description="Loss of defense against phage T4, T5 and T6 but not lambda, P1 or T2, increased conjugation of DncV to cellular proteins, no cGAMP production in vivo during T4 infection." evidence="4 5">
    <original>E</original>
    <variation>A</variation>
    <location>
        <position position="38"/>
    </location>
</feature>
<organism>
    <name type="scientific">Escherichia coli (strain TW11681)</name>
    <dbReference type="NCBI Taxonomy" id="913088"/>
    <lineage>
        <taxon>Bacteria</taxon>
        <taxon>Pseudomonadati</taxon>
        <taxon>Pseudomonadota</taxon>
        <taxon>Gammaproteobacteria</taxon>
        <taxon>Enterobacterales</taxon>
        <taxon>Enterobacteriaceae</taxon>
        <taxon>Escherichia</taxon>
    </lineage>
</organism>
<reference key="1">
    <citation type="journal article" date="2011" name="Infect. Immun.">
        <title>A comparative genomic analysis of diverse clonal types of enterotoxigenic Escherichia coli reveals pathovar-specific conservation.</title>
        <authorList>
            <person name="Sahl J.W."/>
            <person name="Steinsland H."/>
            <person name="Redman J.C."/>
            <person name="Angiuoli S.V."/>
            <person name="Nataro J.P."/>
            <person name="Sommerfelt H."/>
            <person name="Rasko D.A."/>
        </authorList>
    </citation>
    <scope>NUCLEOTIDE SEQUENCE [LARGE SCALE GENOMIC DNA]</scope>
    <source>
        <strain>TW11681</strain>
    </source>
</reference>
<reference key="2">
    <citation type="journal article" date="2019" name="Nature">
        <title>Cyclic GMP-AMP signalling protects bacteria against viral infection.</title>
        <authorList>
            <person name="Cohen D."/>
            <person name="Melamed S."/>
            <person name="Millman A."/>
            <person name="Shulman G."/>
            <person name="Oppenheimer-Shaanan Y."/>
            <person name="Kacen A."/>
            <person name="Doron S."/>
            <person name="Amitai G."/>
            <person name="Sorek R."/>
        </authorList>
    </citation>
    <scope>ANTIVIRAL DEFENSE</scope>
    <scope>NOMENCLATURE</scope>
    <scope>OPERON STRUCTURE</scope>
    <scope>MUTAGENESIS OF GLU-38</scope>
    <source>
        <strain>TW11681</strain>
    </source>
</reference>
<reference key="3">
    <citation type="journal article" date="2020" name="Cell">
        <title>CBASS immunity uses CARF-related effectors to sense 3'-5' and 2'-5'-linked cyclic oligonucleotide signals and protect bacteria from phage infection.</title>
        <authorList>
            <person name="Lowey B."/>
            <person name="Whiteley A.T."/>
            <person name="Keszei A.F.A."/>
            <person name="Morehouse B.R."/>
            <person name="Antine S.P."/>
            <person name="Cabrera V.J."/>
            <person name="Kashin D."/>
            <person name="Schwede F."/>
            <person name="Mekalanos J.J."/>
            <person name="Shao S."/>
            <person name="Lee A.S.Y."/>
            <person name="Kranzusch P.J."/>
        </authorList>
    </citation>
    <scope>NOMENCLATURE</scope>
    <source>
        <strain>TW11681</strain>
    </source>
</reference>
<reference key="4">
    <citation type="journal article" date="2020" name="Nat. Microbiol.">
        <title>Diversity and classification of cyclic-oligonucleotide-based anti-phage signalling systems.</title>
        <authorList>
            <person name="Millman A."/>
            <person name="Melamed S."/>
            <person name="Amitai G."/>
            <person name="Sorek R."/>
        </authorList>
    </citation>
    <scope>CLASSIFICATION AND NOMENCLATURE</scope>
</reference>
<reference key="5">
    <citation type="journal article" date="2023" name="Nature">
        <title>Ubiquitin-like conjugation by bacterial cGAS enhances anti-phage defence.</title>
        <authorList>
            <person name="Jenson J.M."/>
            <person name="Li T."/>
            <person name="Du F."/>
            <person name="Ea C.K."/>
            <person name="Chen Z.J."/>
        </authorList>
    </citation>
    <scope>FUNCTION</scope>
    <scope>ANTIVIRAL DEFENSE</scope>
    <scope>MUTAGENESIS OF GLU-38</scope>
    <source>
        <strain>TW11681</strain>
    </source>
</reference>
<proteinExistence type="evidence at protein level"/>
<accession>P0DTF3</accession>
<sequence>MNMNELVFIDDFDNHVVIMSEVVMRLNSYRQTHYTSTESGGTLIGERRGQHLVITHISEPGQDDVRNRTGLERKGIHHQQKVNDLFQQSNGFIVYLGEWHTHPEDFPHPSFIDIKSWVMGIVATEPMIMLIVGRKDIWIGKKIKNDIKKLKKKMVS</sequence>
<protein>
    <recommendedName>
        <fullName evidence="9">CD-NTase/cGAS isopeptidase</fullName>
        <ecNumber evidence="5">3.4.-.-</ecNumber>
    </recommendedName>
    <alternativeName>
        <fullName evidence="7">CD-NTase-associated protein 3</fullName>
        <shortName evidence="7">Cap3</shortName>
    </alternativeName>
</protein>
<name>CAP3_ECOTW</name>
<keyword id="KW-0002">3D-structure</keyword>
<keyword id="KW-0051">Antiviral defense</keyword>
<keyword id="KW-0378">Hydrolase</keyword>
<keyword id="KW-0479">Metal-binding</keyword>
<keyword id="KW-0482">Metalloprotease</keyword>
<keyword id="KW-0645">Protease</keyword>
<keyword id="KW-0862">Zinc</keyword>
<gene>
    <name evidence="7" type="primary">cap3</name>
    <name type="ORF">ESG_RS0100125</name>
    <name evidence="6" type="ORF">geneD</name>
</gene>
<evidence type="ECO:0000250" key="1">
    <source>
        <dbReference type="UniProtKB" id="D4GTS4"/>
    </source>
</evidence>
<evidence type="ECO:0000250" key="2">
    <source>
        <dbReference type="UniProtKB" id="Q8U1Y4"/>
    </source>
</evidence>
<evidence type="ECO:0000255" key="3">
    <source>
        <dbReference type="PROSITE-ProRule" id="PRU01182"/>
    </source>
</evidence>
<evidence type="ECO:0000269" key="4">
    <source>
    </source>
</evidence>
<evidence type="ECO:0000269" key="5">
    <source>
    </source>
</evidence>
<evidence type="ECO:0000303" key="6">
    <source>
    </source>
</evidence>
<evidence type="ECO:0000303" key="7">
    <source>
    </source>
</evidence>
<evidence type="ECO:0000303" key="8">
    <source>
    </source>
</evidence>
<evidence type="ECO:0000303" key="9">
    <source>
    </source>
</evidence>
<evidence type="ECO:0000305" key="10"/>
<evidence type="ECO:0000305" key="11">
    <source>
    </source>
</evidence>
<comment type="function">
    <text evidence="4 5 8">Metalloprotease priming reversal component of a CBASS antivirus system (PubMed:36848932). CBASS (cyclic oligonucleotide-based antiphage signaling system) provides immunity against bacteriophages. The CD-NTase protein (DncV) synthesizes cyclic nucleotides in response to infection; these serve as specific second messenger signals. The signals activate a diverse range of effectors, leading to bacterial cell death and thus abortive phage infection (PubMed:31533127, PubMed:36848932). A type II-A(GA) CBASS system (PubMed:32839535, PubMed:36848932).</text>
</comment>
<comment type="function">
    <text evidence="5">Reverses the primed state of DncV, the CD-NTase, cleaving it from cellular proteins (PubMed:36848932). Cleaves a Sumo-DncV-DncV fusion protein precisely between the 2 DncV moieties (PubMed:36848932).</text>
</comment>
<comment type="function">
    <text evidence="4 5">Protects E.coli against phage infection (PubMed:31533127, PubMed:36848932). When capV and dncV are introduced in E.coli MG1655 there is 1000-fold protection against phage P1; protection against other phage (T4, T5 and T6) requires the 2 subsequent genes (PubMed:31533127). In another paper the capV-dncV-cap2-cap3 operon gives 10(4)-10(5)-fold protection against phages lambda, T2, T4 and T6, about 1000-fold protection against P1 and 10-fold protection against T5 (PubMed:36848932).</text>
</comment>
<comment type="induction">
    <text evidence="11">Part of a CBASS operon consisting of capV-dncV-cap2-cap3.</text>
</comment>
<comment type="miscellaneous">
    <text evidence="10">The sequence of this protein is available as NCBI RefSeq accession WP_024167427.1.</text>
</comment>
<comment type="similarity">
    <text evidence="10">Belongs to the peptidase M67B family. Cap3 isopeptidase subfamily.</text>
</comment>